<sequence>MNNEKSNAKLRFIISGGGTGGHIFPAISIADALRRRYPECEILFVGAEGRMEMERVPRSGYEIVGLPIKGLDRKHLLSNYKVAIAVIRSMRLANKTIRNFRPDMVIGVGGYASGPTLRRAHSLGIPTLIQEQNSYAGVTNKLLSRGAHKICVAYPEMDKFFSPEKIVFTGNPVRPEIEFGHPSRSESLRFFGFEQSESPVVLVVGGSLGALTINKSITDKLGKWAESGVHLIWQTGKNYIETARKAVENHPGLKCYVNDFITRMDYAYCAADLVVSRAGACSISELCLLGKPTILVPSPNVAEDHQTKNALALSTRAAAVLIPDTEAIELLTDTALSLVRNLAELSSLSEQIRTLAKPQAADRIVDEIARIVEHEKRAN</sequence>
<keyword id="KW-0131">Cell cycle</keyword>
<keyword id="KW-0132">Cell division</keyword>
<keyword id="KW-0997">Cell inner membrane</keyword>
<keyword id="KW-1003">Cell membrane</keyword>
<keyword id="KW-0133">Cell shape</keyword>
<keyword id="KW-0961">Cell wall biogenesis/degradation</keyword>
<keyword id="KW-0328">Glycosyltransferase</keyword>
<keyword id="KW-0472">Membrane</keyword>
<keyword id="KW-0573">Peptidoglycan synthesis</keyword>
<keyword id="KW-0808">Transferase</keyword>
<gene>
    <name evidence="1" type="primary">murG</name>
    <name type="ordered locus">PGN_0627</name>
</gene>
<accession>B2RIF1</accession>
<reference key="1">
    <citation type="journal article" date="2008" name="DNA Res.">
        <title>Determination of the genome sequence of Porphyromonas gingivalis strain ATCC 33277 and genomic comparison with strain W83 revealed extensive genome rearrangements in P. gingivalis.</title>
        <authorList>
            <person name="Naito M."/>
            <person name="Hirakawa H."/>
            <person name="Yamashita A."/>
            <person name="Ohara N."/>
            <person name="Shoji M."/>
            <person name="Yukitake H."/>
            <person name="Nakayama K."/>
            <person name="Toh H."/>
            <person name="Yoshimura F."/>
            <person name="Kuhara S."/>
            <person name="Hattori M."/>
            <person name="Hayashi T."/>
            <person name="Nakayama K."/>
        </authorList>
    </citation>
    <scope>NUCLEOTIDE SEQUENCE [LARGE SCALE GENOMIC DNA]</scope>
    <source>
        <strain>ATCC 33277 / DSM 20709 / CIP 103683 / JCM 12257 / NCTC 11834 / 2561</strain>
    </source>
</reference>
<proteinExistence type="inferred from homology"/>
<dbReference type="EC" id="2.4.1.227" evidence="1"/>
<dbReference type="EMBL" id="AP009380">
    <property type="protein sequence ID" value="BAG33146.1"/>
    <property type="molecule type" value="Genomic_DNA"/>
</dbReference>
<dbReference type="RefSeq" id="WP_012457659.1">
    <property type="nucleotide sequence ID" value="NC_010729.1"/>
</dbReference>
<dbReference type="SMR" id="B2RIF1"/>
<dbReference type="CAZy" id="GT28">
    <property type="family name" value="Glycosyltransferase Family 28"/>
</dbReference>
<dbReference type="GeneID" id="29255853"/>
<dbReference type="KEGG" id="pgn:PGN_0627"/>
<dbReference type="eggNOG" id="COG0707">
    <property type="taxonomic scope" value="Bacteria"/>
</dbReference>
<dbReference type="HOGENOM" id="CLU_037404_0_1_10"/>
<dbReference type="OrthoDB" id="9808936at2"/>
<dbReference type="BioCyc" id="PGIN431947:G1G2V-688-MONOMER"/>
<dbReference type="UniPathway" id="UPA00219"/>
<dbReference type="Proteomes" id="UP000008842">
    <property type="component" value="Chromosome"/>
</dbReference>
<dbReference type="GO" id="GO:0005886">
    <property type="term" value="C:plasma membrane"/>
    <property type="evidence" value="ECO:0007669"/>
    <property type="project" value="UniProtKB-SubCell"/>
</dbReference>
<dbReference type="GO" id="GO:0051991">
    <property type="term" value="F:UDP-N-acetyl-D-glucosamine:N-acetylmuramoyl-L-alanyl-D-glutamyl-meso-2,6-diaminopimelyl-D-alanyl-D-alanine-diphosphoundecaprenol 4-beta-N-acetylglucosaminlytransferase activity"/>
    <property type="evidence" value="ECO:0007669"/>
    <property type="project" value="RHEA"/>
</dbReference>
<dbReference type="GO" id="GO:0050511">
    <property type="term" value="F:undecaprenyldiphospho-muramoylpentapeptide beta-N-acetylglucosaminyltransferase activity"/>
    <property type="evidence" value="ECO:0007669"/>
    <property type="project" value="UniProtKB-UniRule"/>
</dbReference>
<dbReference type="GO" id="GO:0005975">
    <property type="term" value="P:carbohydrate metabolic process"/>
    <property type="evidence" value="ECO:0007669"/>
    <property type="project" value="InterPro"/>
</dbReference>
<dbReference type="GO" id="GO:0051301">
    <property type="term" value="P:cell division"/>
    <property type="evidence" value="ECO:0007669"/>
    <property type="project" value="UniProtKB-KW"/>
</dbReference>
<dbReference type="GO" id="GO:0071555">
    <property type="term" value="P:cell wall organization"/>
    <property type="evidence" value="ECO:0007669"/>
    <property type="project" value="UniProtKB-KW"/>
</dbReference>
<dbReference type="GO" id="GO:0030259">
    <property type="term" value="P:lipid glycosylation"/>
    <property type="evidence" value="ECO:0007669"/>
    <property type="project" value="UniProtKB-UniRule"/>
</dbReference>
<dbReference type="GO" id="GO:0009252">
    <property type="term" value="P:peptidoglycan biosynthetic process"/>
    <property type="evidence" value="ECO:0007669"/>
    <property type="project" value="UniProtKB-UniRule"/>
</dbReference>
<dbReference type="GO" id="GO:0008360">
    <property type="term" value="P:regulation of cell shape"/>
    <property type="evidence" value="ECO:0007669"/>
    <property type="project" value="UniProtKB-KW"/>
</dbReference>
<dbReference type="CDD" id="cd03785">
    <property type="entry name" value="GT28_MurG"/>
    <property type="match status" value="1"/>
</dbReference>
<dbReference type="Gene3D" id="3.40.50.2000">
    <property type="entry name" value="Glycogen Phosphorylase B"/>
    <property type="match status" value="2"/>
</dbReference>
<dbReference type="HAMAP" id="MF_00033">
    <property type="entry name" value="MurG"/>
    <property type="match status" value="1"/>
</dbReference>
<dbReference type="InterPro" id="IPR006009">
    <property type="entry name" value="GlcNAc_MurG"/>
</dbReference>
<dbReference type="InterPro" id="IPR007235">
    <property type="entry name" value="Glyco_trans_28_C"/>
</dbReference>
<dbReference type="InterPro" id="IPR004276">
    <property type="entry name" value="GlycoTrans_28_N"/>
</dbReference>
<dbReference type="NCBIfam" id="TIGR01133">
    <property type="entry name" value="murG"/>
    <property type="match status" value="1"/>
</dbReference>
<dbReference type="PANTHER" id="PTHR21015:SF22">
    <property type="entry name" value="GLYCOSYLTRANSFERASE"/>
    <property type="match status" value="1"/>
</dbReference>
<dbReference type="PANTHER" id="PTHR21015">
    <property type="entry name" value="UDP-N-ACETYLGLUCOSAMINE--N-ACETYLMURAMYL-(PENTAPEPTIDE) PYROPHOSPHORYL-UNDECAPRENOL N-ACETYLGLUCOSAMINE TRANSFERASE 1"/>
    <property type="match status" value="1"/>
</dbReference>
<dbReference type="Pfam" id="PF04101">
    <property type="entry name" value="Glyco_tran_28_C"/>
    <property type="match status" value="1"/>
</dbReference>
<dbReference type="Pfam" id="PF03033">
    <property type="entry name" value="Glyco_transf_28"/>
    <property type="match status" value="1"/>
</dbReference>
<dbReference type="SUPFAM" id="SSF53756">
    <property type="entry name" value="UDP-Glycosyltransferase/glycogen phosphorylase"/>
    <property type="match status" value="1"/>
</dbReference>
<name>MURG_PORG3</name>
<evidence type="ECO:0000255" key="1">
    <source>
        <dbReference type="HAMAP-Rule" id="MF_00033"/>
    </source>
</evidence>
<feature type="chain" id="PRO_1000090458" description="UDP-N-acetylglucosamine--N-acetylmuramyl-(pentapeptide) pyrophosphoryl-undecaprenol N-acetylglucosamine transferase">
    <location>
        <begin position="1"/>
        <end position="379"/>
    </location>
</feature>
<feature type="binding site" evidence="1">
    <location>
        <begin position="19"/>
        <end position="21"/>
    </location>
    <ligand>
        <name>UDP-N-acetyl-alpha-D-glucosamine</name>
        <dbReference type="ChEBI" id="CHEBI:57705"/>
    </ligand>
</feature>
<feature type="binding site" evidence="1">
    <location>
        <position position="133"/>
    </location>
    <ligand>
        <name>UDP-N-acetyl-alpha-D-glucosamine</name>
        <dbReference type="ChEBI" id="CHEBI:57705"/>
    </ligand>
</feature>
<feature type="binding site" evidence="1">
    <location>
        <position position="174"/>
    </location>
    <ligand>
        <name>UDP-N-acetyl-alpha-D-glucosamine</name>
        <dbReference type="ChEBI" id="CHEBI:57705"/>
    </ligand>
</feature>
<feature type="binding site" evidence="1">
    <location>
        <position position="207"/>
    </location>
    <ligand>
        <name>UDP-N-acetyl-alpha-D-glucosamine</name>
        <dbReference type="ChEBI" id="CHEBI:57705"/>
    </ligand>
</feature>
<feature type="binding site" evidence="1">
    <location>
        <position position="261"/>
    </location>
    <ligand>
        <name>UDP-N-acetyl-alpha-D-glucosamine</name>
        <dbReference type="ChEBI" id="CHEBI:57705"/>
    </ligand>
</feature>
<feature type="binding site" evidence="1">
    <location>
        <position position="306"/>
    </location>
    <ligand>
        <name>UDP-N-acetyl-alpha-D-glucosamine</name>
        <dbReference type="ChEBI" id="CHEBI:57705"/>
    </ligand>
</feature>
<protein>
    <recommendedName>
        <fullName evidence="1">UDP-N-acetylglucosamine--N-acetylmuramyl-(pentapeptide) pyrophosphoryl-undecaprenol N-acetylglucosamine transferase</fullName>
        <ecNumber evidence="1">2.4.1.227</ecNumber>
    </recommendedName>
    <alternativeName>
        <fullName evidence="1">Undecaprenyl-PP-MurNAc-pentapeptide-UDPGlcNAc GlcNAc transferase</fullName>
    </alternativeName>
</protein>
<comment type="function">
    <text evidence="1">Cell wall formation. Catalyzes the transfer of a GlcNAc subunit on undecaprenyl-pyrophosphoryl-MurNAc-pentapeptide (lipid intermediate I) to form undecaprenyl-pyrophosphoryl-MurNAc-(pentapeptide)GlcNAc (lipid intermediate II).</text>
</comment>
<comment type="catalytic activity">
    <reaction evidence="1">
        <text>di-trans,octa-cis-undecaprenyl diphospho-N-acetyl-alpha-D-muramoyl-L-alanyl-D-glutamyl-meso-2,6-diaminopimeloyl-D-alanyl-D-alanine + UDP-N-acetyl-alpha-D-glucosamine = di-trans,octa-cis-undecaprenyl diphospho-[N-acetyl-alpha-D-glucosaminyl-(1-&gt;4)]-N-acetyl-alpha-D-muramoyl-L-alanyl-D-glutamyl-meso-2,6-diaminopimeloyl-D-alanyl-D-alanine + UDP + H(+)</text>
        <dbReference type="Rhea" id="RHEA:31227"/>
        <dbReference type="ChEBI" id="CHEBI:15378"/>
        <dbReference type="ChEBI" id="CHEBI:57705"/>
        <dbReference type="ChEBI" id="CHEBI:58223"/>
        <dbReference type="ChEBI" id="CHEBI:61387"/>
        <dbReference type="ChEBI" id="CHEBI:61388"/>
        <dbReference type="EC" id="2.4.1.227"/>
    </reaction>
</comment>
<comment type="pathway">
    <text evidence="1">Cell wall biogenesis; peptidoglycan biosynthesis.</text>
</comment>
<comment type="subcellular location">
    <subcellularLocation>
        <location evidence="1">Cell inner membrane</location>
        <topology evidence="1">Peripheral membrane protein</topology>
        <orientation evidence="1">Cytoplasmic side</orientation>
    </subcellularLocation>
</comment>
<comment type="similarity">
    <text evidence="1">Belongs to the glycosyltransferase 28 family. MurG subfamily.</text>
</comment>
<organism>
    <name type="scientific">Porphyromonas gingivalis (strain ATCC 33277 / DSM 20709 / CIP 103683 / JCM 12257 / NCTC 11834 / 2561)</name>
    <dbReference type="NCBI Taxonomy" id="431947"/>
    <lineage>
        <taxon>Bacteria</taxon>
        <taxon>Pseudomonadati</taxon>
        <taxon>Bacteroidota</taxon>
        <taxon>Bacteroidia</taxon>
        <taxon>Bacteroidales</taxon>
        <taxon>Porphyromonadaceae</taxon>
        <taxon>Porphyromonas</taxon>
    </lineage>
</organism>